<gene>
    <name type="primary">Zranb3</name>
</gene>
<organism>
    <name type="scientific">Mus musculus</name>
    <name type="common">Mouse</name>
    <dbReference type="NCBI Taxonomy" id="10090"/>
    <lineage>
        <taxon>Eukaryota</taxon>
        <taxon>Metazoa</taxon>
        <taxon>Chordata</taxon>
        <taxon>Craniata</taxon>
        <taxon>Vertebrata</taxon>
        <taxon>Euteleostomi</taxon>
        <taxon>Mammalia</taxon>
        <taxon>Eutheria</taxon>
        <taxon>Euarchontoglires</taxon>
        <taxon>Glires</taxon>
        <taxon>Rodentia</taxon>
        <taxon>Myomorpha</taxon>
        <taxon>Muroidea</taxon>
        <taxon>Muridae</taxon>
        <taxon>Murinae</taxon>
        <taxon>Mus</taxon>
        <taxon>Mus</taxon>
    </lineage>
</organism>
<keyword id="KW-0067">ATP-binding</keyword>
<keyword id="KW-0158">Chromosome</keyword>
<keyword id="KW-0903">Direct protein sequencing</keyword>
<keyword id="KW-0227">DNA damage</keyword>
<keyword id="KW-0234">DNA repair</keyword>
<keyword id="KW-0255">Endonuclease</keyword>
<keyword id="KW-0347">Helicase</keyword>
<keyword id="KW-0378">Hydrolase</keyword>
<keyword id="KW-0479">Metal-binding</keyword>
<keyword id="KW-0511">Multifunctional enzyme</keyword>
<keyword id="KW-0540">Nuclease</keyword>
<keyword id="KW-0547">Nucleotide-binding</keyword>
<keyword id="KW-0539">Nucleus</keyword>
<keyword id="KW-1185">Reference proteome</keyword>
<keyword id="KW-0862">Zinc</keyword>
<keyword id="KW-0863">Zinc-finger</keyword>
<reference key="1">
    <citation type="journal article" date="2005" name="Science">
        <title>The transcriptional landscape of the mammalian genome.</title>
        <authorList>
            <person name="Carninci P."/>
            <person name="Kasukawa T."/>
            <person name="Katayama S."/>
            <person name="Gough J."/>
            <person name="Frith M.C."/>
            <person name="Maeda N."/>
            <person name="Oyama R."/>
            <person name="Ravasi T."/>
            <person name="Lenhard B."/>
            <person name="Wells C."/>
            <person name="Kodzius R."/>
            <person name="Shimokawa K."/>
            <person name="Bajic V.B."/>
            <person name="Brenner S.E."/>
            <person name="Batalov S."/>
            <person name="Forrest A.R."/>
            <person name="Zavolan M."/>
            <person name="Davis M.J."/>
            <person name="Wilming L.G."/>
            <person name="Aidinis V."/>
            <person name="Allen J.E."/>
            <person name="Ambesi-Impiombato A."/>
            <person name="Apweiler R."/>
            <person name="Aturaliya R.N."/>
            <person name="Bailey T.L."/>
            <person name="Bansal M."/>
            <person name="Baxter L."/>
            <person name="Beisel K.W."/>
            <person name="Bersano T."/>
            <person name="Bono H."/>
            <person name="Chalk A.M."/>
            <person name="Chiu K.P."/>
            <person name="Choudhary V."/>
            <person name="Christoffels A."/>
            <person name="Clutterbuck D.R."/>
            <person name="Crowe M.L."/>
            <person name="Dalla E."/>
            <person name="Dalrymple B.P."/>
            <person name="de Bono B."/>
            <person name="Della Gatta G."/>
            <person name="di Bernardo D."/>
            <person name="Down T."/>
            <person name="Engstrom P."/>
            <person name="Fagiolini M."/>
            <person name="Faulkner G."/>
            <person name="Fletcher C.F."/>
            <person name="Fukushima T."/>
            <person name="Furuno M."/>
            <person name="Futaki S."/>
            <person name="Gariboldi M."/>
            <person name="Georgii-Hemming P."/>
            <person name="Gingeras T.R."/>
            <person name="Gojobori T."/>
            <person name="Green R.E."/>
            <person name="Gustincich S."/>
            <person name="Harbers M."/>
            <person name="Hayashi Y."/>
            <person name="Hensch T.K."/>
            <person name="Hirokawa N."/>
            <person name="Hill D."/>
            <person name="Huminiecki L."/>
            <person name="Iacono M."/>
            <person name="Ikeo K."/>
            <person name="Iwama A."/>
            <person name="Ishikawa T."/>
            <person name="Jakt M."/>
            <person name="Kanapin A."/>
            <person name="Katoh M."/>
            <person name="Kawasawa Y."/>
            <person name="Kelso J."/>
            <person name="Kitamura H."/>
            <person name="Kitano H."/>
            <person name="Kollias G."/>
            <person name="Krishnan S.P."/>
            <person name="Kruger A."/>
            <person name="Kummerfeld S.K."/>
            <person name="Kurochkin I.V."/>
            <person name="Lareau L.F."/>
            <person name="Lazarevic D."/>
            <person name="Lipovich L."/>
            <person name="Liu J."/>
            <person name="Liuni S."/>
            <person name="McWilliam S."/>
            <person name="Madan Babu M."/>
            <person name="Madera M."/>
            <person name="Marchionni L."/>
            <person name="Matsuda H."/>
            <person name="Matsuzawa S."/>
            <person name="Miki H."/>
            <person name="Mignone F."/>
            <person name="Miyake S."/>
            <person name="Morris K."/>
            <person name="Mottagui-Tabar S."/>
            <person name="Mulder N."/>
            <person name="Nakano N."/>
            <person name="Nakauchi H."/>
            <person name="Ng P."/>
            <person name="Nilsson R."/>
            <person name="Nishiguchi S."/>
            <person name="Nishikawa S."/>
            <person name="Nori F."/>
            <person name="Ohara O."/>
            <person name="Okazaki Y."/>
            <person name="Orlando V."/>
            <person name="Pang K.C."/>
            <person name="Pavan W.J."/>
            <person name="Pavesi G."/>
            <person name="Pesole G."/>
            <person name="Petrovsky N."/>
            <person name="Piazza S."/>
            <person name="Reed J."/>
            <person name="Reid J.F."/>
            <person name="Ring B.Z."/>
            <person name="Ringwald M."/>
            <person name="Rost B."/>
            <person name="Ruan Y."/>
            <person name="Salzberg S.L."/>
            <person name="Sandelin A."/>
            <person name="Schneider C."/>
            <person name="Schoenbach C."/>
            <person name="Sekiguchi K."/>
            <person name="Semple C.A."/>
            <person name="Seno S."/>
            <person name="Sessa L."/>
            <person name="Sheng Y."/>
            <person name="Shibata Y."/>
            <person name="Shimada H."/>
            <person name="Shimada K."/>
            <person name="Silva D."/>
            <person name="Sinclair B."/>
            <person name="Sperling S."/>
            <person name="Stupka E."/>
            <person name="Sugiura K."/>
            <person name="Sultana R."/>
            <person name="Takenaka Y."/>
            <person name="Taki K."/>
            <person name="Tammoja K."/>
            <person name="Tan S.L."/>
            <person name="Tang S."/>
            <person name="Taylor M.S."/>
            <person name="Tegner J."/>
            <person name="Teichmann S.A."/>
            <person name="Ueda H.R."/>
            <person name="van Nimwegen E."/>
            <person name="Verardo R."/>
            <person name="Wei C.L."/>
            <person name="Yagi K."/>
            <person name="Yamanishi H."/>
            <person name="Zabarovsky E."/>
            <person name="Zhu S."/>
            <person name="Zimmer A."/>
            <person name="Hide W."/>
            <person name="Bult C."/>
            <person name="Grimmond S.M."/>
            <person name="Teasdale R.D."/>
            <person name="Liu E.T."/>
            <person name="Brusic V."/>
            <person name="Quackenbush J."/>
            <person name="Wahlestedt C."/>
            <person name="Mattick J.S."/>
            <person name="Hume D.A."/>
            <person name="Kai C."/>
            <person name="Sasaki D."/>
            <person name="Tomaru Y."/>
            <person name="Fukuda S."/>
            <person name="Kanamori-Katayama M."/>
            <person name="Suzuki M."/>
            <person name="Aoki J."/>
            <person name="Arakawa T."/>
            <person name="Iida J."/>
            <person name="Imamura K."/>
            <person name="Itoh M."/>
            <person name="Kato T."/>
            <person name="Kawaji H."/>
            <person name="Kawagashira N."/>
            <person name="Kawashima T."/>
            <person name="Kojima M."/>
            <person name="Kondo S."/>
            <person name="Konno H."/>
            <person name="Nakano K."/>
            <person name="Ninomiya N."/>
            <person name="Nishio T."/>
            <person name="Okada M."/>
            <person name="Plessy C."/>
            <person name="Shibata K."/>
            <person name="Shiraki T."/>
            <person name="Suzuki S."/>
            <person name="Tagami M."/>
            <person name="Waki K."/>
            <person name="Watahiki A."/>
            <person name="Okamura-Oho Y."/>
            <person name="Suzuki H."/>
            <person name="Kawai J."/>
            <person name="Hayashizaki Y."/>
        </authorList>
    </citation>
    <scope>NUCLEOTIDE SEQUENCE [LARGE SCALE MRNA]</scope>
    <source>
        <strain>C57BL/6J</strain>
        <tissue>Liver</tissue>
    </source>
</reference>
<reference key="2">
    <citation type="journal article" date="2004" name="Genome Res.">
        <title>The status, quality, and expansion of the NIH full-length cDNA project: the Mammalian Gene Collection (MGC).</title>
        <authorList>
            <consortium name="The MGC Project Team"/>
        </authorList>
    </citation>
    <scope>NUCLEOTIDE SEQUENCE [LARGE SCALE MRNA]</scope>
    <source>
        <strain>C57BL/6J</strain>
        <tissue>Brain</tissue>
    </source>
</reference>
<reference key="3">
    <citation type="submission" date="2009-01" db="UniProtKB">
        <authorList>
            <person name="Lubec G."/>
            <person name="Sunyer B."/>
            <person name="Chen W.-Q."/>
        </authorList>
    </citation>
    <scope>PROTEIN SEQUENCE OF 557-566</scope>
    <scope>IDENTIFICATION BY MASS SPECTROMETRY</scope>
    <source>
        <strain>OF1</strain>
        <tissue>Hippocampus</tissue>
    </source>
</reference>
<proteinExistence type="evidence at protein level"/>
<feature type="chain" id="PRO_0000278183" description="DNA annealing helicase and endonuclease ZRANB3">
    <location>
        <begin position="1"/>
        <end position="1069"/>
    </location>
</feature>
<feature type="domain" description="Helicase ATP-binding" evidence="4">
    <location>
        <begin position="46"/>
        <end position="208"/>
    </location>
</feature>
<feature type="domain" description="Helicase C-terminal" evidence="5">
    <location>
        <begin position="325"/>
        <end position="485"/>
    </location>
</feature>
<feature type="domain" description="HNH">
    <location>
        <begin position="1001"/>
        <end position="1041"/>
    </location>
</feature>
<feature type="zinc finger region" description="RanBP2-type" evidence="3">
    <location>
        <begin position="617"/>
        <end position="646"/>
    </location>
</feature>
<feature type="region of interest" description="DNA annealing helicase activity" evidence="1">
    <location>
        <begin position="46"/>
        <end position="481"/>
    </location>
</feature>
<feature type="region of interest" description="Disordered" evidence="6">
    <location>
        <begin position="648"/>
        <end position="720"/>
    </location>
</feature>
<feature type="region of interest" description="Endonuclease activity" evidence="1">
    <location>
        <begin position="1001"/>
        <end position="1069"/>
    </location>
</feature>
<feature type="short sequence motif" description="DEAH box">
    <location>
        <begin position="157"/>
        <end position="160"/>
    </location>
</feature>
<feature type="short sequence motif" description="PIP-box">
    <location>
        <begin position="518"/>
        <end position="525"/>
    </location>
</feature>
<feature type="short sequence motif" description="APIM motif">
    <location>
        <begin position="1064"/>
        <end position="1068"/>
    </location>
</feature>
<feature type="compositionally biased region" description="Basic and acidic residues" evidence="6">
    <location>
        <begin position="652"/>
        <end position="661"/>
    </location>
</feature>
<feature type="compositionally biased region" description="Basic and acidic residues" evidence="6">
    <location>
        <begin position="677"/>
        <end position="707"/>
    </location>
</feature>
<feature type="binding site" evidence="4">
    <location>
        <begin position="59"/>
        <end position="66"/>
    </location>
    <ligand>
        <name>ATP</name>
        <dbReference type="ChEBI" id="CHEBI:30616"/>
    </ligand>
</feature>
<feature type="sequence conflict" description="In Ref. 1; BAC34042." evidence="7" ref="1">
    <original>I</original>
    <variation>M</variation>
    <location>
        <position position="311"/>
    </location>
</feature>
<feature type="sequence conflict" description="In Ref. 1; BAC38978." evidence="7" ref="1">
    <original>G</original>
    <variation>R</variation>
    <location>
        <position position="435"/>
    </location>
</feature>
<feature type="sequence conflict" description="In Ref. 2; AAI17923/AAI17922." evidence="7" ref="2">
    <original>I</original>
    <variation>L</variation>
    <location>
        <position position="865"/>
    </location>
</feature>
<feature type="sequence conflict" description="In Ref. 2; AAI17923/AAI17922." evidence="7" ref="2">
    <original>S</original>
    <variation>T</variation>
    <location>
        <position position="887"/>
    </location>
</feature>
<feature type="sequence conflict" description="In Ref. 2; AAI17923/AAI17922." evidence="7" ref="2">
    <original>H</original>
    <variation>R</variation>
    <location>
        <position position="957"/>
    </location>
</feature>
<feature type="sequence conflict" description="In Ref. 2; AAI17923/AAI17922." evidence="7" ref="2">
    <original>R</original>
    <variation>W</variation>
    <location>
        <position position="968"/>
    </location>
</feature>
<accession>Q6NZP1</accession>
<accession>Q148X9</accession>
<accession>Q8BJJ3</accession>
<accession>Q8BWT6</accession>
<protein>
    <recommendedName>
        <fullName>DNA annealing helicase and endonuclease ZRANB3</fullName>
    </recommendedName>
    <alternativeName>
        <fullName>Annealing helicase 2</fullName>
        <shortName>AH2</shortName>
    </alternativeName>
    <alternativeName>
        <fullName>Zinc finger Ran-binding domain-containing protein 3</fullName>
    </alternativeName>
    <domain>
        <recommendedName>
            <fullName>DNA annealing helicase ZRANB3</fullName>
            <ecNumber>3.6.4.-</ecNumber>
        </recommendedName>
    </domain>
    <domain>
        <recommendedName>
            <fullName>Endonuclease ZRANB3</fullName>
            <ecNumber>3.1.-.-</ecNumber>
        </recommendedName>
    </domain>
</protein>
<comment type="function">
    <text evidence="2">DNA annealing helicase and endonuclease required to maintain genome stability at stalled or collapsed replication forks by facilitating fork restart and limiting inappropriate recombination that could occur during template switching events. Recruited to the sites of stalled DNA replication by polyubiquitinated PCNA and acts as a structure-specific endonuclease that cleaves the replication fork D-loop intermediate, generating an accessible 3'-OH group in the template of the leading strand, which is amenable to extension by DNA polymerase. In addition to endonuclease activity, also catalyzes the fork regression via annealing helicase activity in order to prevent disintegration of the replication fork and the formation of double-strand breaks.</text>
</comment>
<comment type="subunit">
    <text evidence="2">Interacts (via PIP-box and RanBP2-type zinc finger) with PCNA (when PCNA is polyubiquitinated via 'Lys-63'-linked polyubiquitin).</text>
</comment>
<comment type="subcellular location">
    <subcellularLocation>
        <location evidence="2">Nucleus</location>
    </subcellularLocation>
    <subcellularLocation>
        <location evidence="2">Chromosome</location>
    </subcellularLocation>
    <text evidence="2">Following DNA damage, recruited to sites of DNA damage and stalled replication forks by polyubiquitinated PCNA.</text>
</comment>
<comment type="domain">
    <text evidence="2">The PIP-box mediates the interaction with PCNA, while the RanBP2-type zinc finger mediates binding to 'Lys-63'-linked polyubiquitin.</text>
</comment>
<comment type="miscellaneous">
    <text evidence="2">In contrast to classical helicases that unwing DNA, annealing helicases rewind it.</text>
</comment>
<comment type="similarity">
    <text evidence="7">Belongs to the SNF2/RAD54 helicase family.</text>
</comment>
<evidence type="ECO:0000250" key="1"/>
<evidence type="ECO:0000250" key="2">
    <source>
        <dbReference type="UniProtKB" id="Q5FWF4"/>
    </source>
</evidence>
<evidence type="ECO:0000255" key="3">
    <source>
        <dbReference type="PROSITE-ProRule" id="PRU00322"/>
    </source>
</evidence>
<evidence type="ECO:0000255" key="4">
    <source>
        <dbReference type="PROSITE-ProRule" id="PRU00541"/>
    </source>
</evidence>
<evidence type="ECO:0000255" key="5">
    <source>
        <dbReference type="PROSITE-ProRule" id="PRU00542"/>
    </source>
</evidence>
<evidence type="ECO:0000256" key="6">
    <source>
        <dbReference type="SAM" id="MobiDB-lite"/>
    </source>
</evidence>
<evidence type="ECO:0000305" key="7"/>
<name>ZRAB3_MOUSE</name>
<sequence length="1069" mass="120896">MPTAGSKKKAPTPQISCLTSESYTQLDFLPDKLRTKLLPFQKDGIVFALRRDGRCMVADEMGLGKTIQAIAIAYFYKEEWPLLIVVPSSLRYPWIEELEKWIPELEPEEINVVMNKTDIGRIPGSRVTVLGYGLLTTDAETLLDALNTQNFRVVIVDESHYMKSRTAARSKILLPMVQKARRAILLTGTPALGRPEELFMQIEALFPQKFGTWIEYAKRYCNAHVRYFGKRRQWDCRGASNLSELHQLLNDIMIRRLKSEVLSQLPPKVRQRIPFDLPPAAVKELNASFEEWQKLMRAPNSGAMETVMGLITRMFKQTAIAKAGAVKDYIKMLLQNDSLKFLVFAHHLSMLQACTEAVIESKSRYIRIDGSVPSSERIHLVNQFQKDPDTRVAILSIQAAGQGLTFTAASHVVFAELYWDPGHIKQAEDRAHRIGQCSSVNIHYLIANGTLDSLMWAMLNRKAQVTGSTLNGRKEKLQATEDDKEKWGFLQFAEAWTPSDSFEELKDSVFTHFEKEKQHDIRSFFLPKLKKRQLETTCDDPEAFKEKITVASDPRKMATSDSTADKNGCEPEAKRLKSLSTEDHSSALEEGPSLQARATSMEVVHEVKPPLASPALPEKGWQCGFCTFLNNPGLPYCEMCENPRSRAAGRNHLQDNNKNDEDAAQESTSKSDQAGLECERQCPERLEAEQSANSKEEALEGGGEDRLPSQPEIGQLNNSGTLPVRETFMFCASRNTDRIHLYTKDGKPMNCNFIPLDIKLDLWEDLPATFQLKQNRSLILRFVREWSSLTAMKQRVLRKSGQLFCSPLLASEEITKQQAKENNTRRYITKEDVAKASMNKVKSDGGHIRLITKESMTQDSSLKKIDSACVPSLNPCPADLTVEPSPSKGYIQAVDKEGRPLCLRCQHPTCQPEQTAKASAWDSRFCSLKCQEEFWIRSNNSYLRAQVFATEHGVCQHCGVDAQELFLRMRDAPKSHRKSLLNAAWTAKLPLEQLNEMLRNPGEGHFWQVDHIRPVYEGGGQCSLDNLQTLCTVCHKERTAQQAKERSQVRRLSLATKHGSDITRFLVKK</sequence>
<dbReference type="EC" id="3.6.4.-"/>
<dbReference type="EC" id="3.1.-.-"/>
<dbReference type="EMBL" id="AK050039">
    <property type="protein sequence ID" value="BAC34042.1"/>
    <property type="molecule type" value="mRNA"/>
</dbReference>
<dbReference type="EMBL" id="AK083641">
    <property type="protein sequence ID" value="BAC38978.1"/>
    <property type="molecule type" value="mRNA"/>
</dbReference>
<dbReference type="EMBL" id="BC066035">
    <property type="protein sequence ID" value="AAH66035.1"/>
    <property type="molecule type" value="mRNA"/>
</dbReference>
<dbReference type="EMBL" id="BC117921">
    <property type="protein sequence ID" value="AAI17922.1"/>
    <property type="molecule type" value="mRNA"/>
</dbReference>
<dbReference type="EMBL" id="BC117922">
    <property type="protein sequence ID" value="AAI17923.1"/>
    <property type="molecule type" value="mRNA"/>
</dbReference>
<dbReference type="CCDS" id="CCDS35697.1"/>
<dbReference type="RefSeq" id="NP_001272874.1">
    <property type="nucleotide sequence ID" value="NM_001285945.1"/>
</dbReference>
<dbReference type="RefSeq" id="NP_001344502.1">
    <property type="nucleotide sequence ID" value="NM_001357573.1"/>
</dbReference>
<dbReference type="RefSeq" id="NP_081954.1">
    <property type="nucleotide sequence ID" value="NM_027678.3"/>
</dbReference>
<dbReference type="RefSeq" id="XP_006529475.1">
    <property type="nucleotide sequence ID" value="XM_006529412.2"/>
</dbReference>
<dbReference type="SMR" id="Q6NZP1"/>
<dbReference type="BioGRID" id="230505">
    <property type="interactions" value="2"/>
</dbReference>
<dbReference type="FunCoup" id="Q6NZP1">
    <property type="interactions" value="1307"/>
</dbReference>
<dbReference type="STRING" id="10090.ENSMUSP00000108157"/>
<dbReference type="iPTMnet" id="Q6NZP1"/>
<dbReference type="PhosphoSitePlus" id="Q6NZP1"/>
<dbReference type="PaxDb" id="10090-ENSMUSP00000083806"/>
<dbReference type="PeptideAtlas" id="Q6NZP1"/>
<dbReference type="ProteomicsDB" id="275160"/>
<dbReference type="Antibodypedia" id="56175">
    <property type="antibodies" value="70 antibodies from 18 providers"/>
</dbReference>
<dbReference type="Ensembl" id="ENSMUST00000086614.12">
    <property type="protein sequence ID" value="ENSMUSP00000083806.6"/>
    <property type="gene ID" value="ENSMUSG00000036086.17"/>
</dbReference>
<dbReference type="Ensembl" id="ENSMUST00000112538.4">
    <property type="protein sequence ID" value="ENSMUSP00000108157.3"/>
    <property type="gene ID" value="ENSMUSG00000036086.17"/>
</dbReference>
<dbReference type="GeneID" id="226409"/>
<dbReference type="KEGG" id="mmu:226409"/>
<dbReference type="UCSC" id="uc007cld.2">
    <property type="organism name" value="mouse"/>
</dbReference>
<dbReference type="AGR" id="MGI:1918362"/>
<dbReference type="CTD" id="84083"/>
<dbReference type="MGI" id="MGI:1918362">
    <property type="gene designation" value="Zranb3"/>
</dbReference>
<dbReference type="VEuPathDB" id="HostDB:ENSMUSG00000036086"/>
<dbReference type="eggNOG" id="KOG1000">
    <property type="taxonomic scope" value="Eukaryota"/>
</dbReference>
<dbReference type="GeneTree" id="ENSGT00940000158559"/>
<dbReference type="HOGENOM" id="CLU_004251_0_0_1"/>
<dbReference type="InParanoid" id="Q6NZP1"/>
<dbReference type="OMA" id="WRKVVLH"/>
<dbReference type="OrthoDB" id="2801544at2759"/>
<dbReference type="PhylomeDB" id="Q6NZP1"/>
<dbReference type="TreeFam" id="TF354227"/>
<dbReference type="BioGRID-ORCS" id="226409">
    <property type="hits" value="5 hits in 118 CRISPR screens"/>
</dbReference>
<dbReference type="ChiTaRS" id="Zranb3">
    <property type="organism name" value="mouse"/>
</dbReference>
<dbReference type="PRO" id="PR:Q6NZP1"/>
<dbReference type="Proteomes" id="UP000000589">
    <property type="component" value="Chromosome 1"/>
</dbReference>
<dbReference type="RNAct" id="Q6NZP1">
    <property type="molecule type" value="protein"/>
</dbReference>
<dbReference type="Bgee" id="ENSMUSG00000036086">
    <property type="expression patterns" value="Expressed in dorsal pancreas and 178 other cell types or tissues"/>
</dbReference>
<dbReference type="GO" id="GO:0043596">
    <property type="term" value="C:nuclear replication fork"/>
    <property type="evidence" value="ECO:0000250"/>
    <property type="project" value="UniProtKB"/>
</dbReference>
<dbReference type="GO" id="GO:0005654">
    <property type="term" value="C:nucleoplasm"/>
    <property type="evidence" value="ECO:0007669"/>
    <property type="project" value="Ensembl"/>
</dbReference>
<dbReference type="GO" id="GO:0005524">
    <property type="term" value="F:ATP binding"/>
    <property type="evidence" value="ECO:0007669"/>
    <property type="project" value="UniProtKB-KW"/>
</dbReference>
<dbReference type="GO" id="GO:0036310">
    <property type="term" value="F:ATP-dependent DNA/DNA annealing activity"/>
    <property type="evidence" value="ECO:0000250"/>
    <property type="project" value="UniProtKB"/>
</dbReference>
<dbReference type="GO" id="GO:0004520">
    <property type="term" value="F:DNA endonuclease activity"/>
    <property type="evidence" value="ECO:0000250"/>
    <property type="project" value="UniProtKB"/>
</dbReference>
<dbReference type="GO" id="GO:0004386">
    <property type="term" value="F:helicase activity"/>
    <property type="evidence" value="ECO:0007669"/>
    <property type="project" value="UniProtKB-KW"/>
</dbReference>
<dbReference type="GO" id="GO:0070530">
    <property type="term" value="F:K63-linked polyubiquitin modification-dependent protein binding"/>
    <property type="evidence" value="ECO:0000250"/>
    <property type="project" value="UniProtKB"/>
</dbReference>
<dbReference type="GO" id="GO:0008270">
    <property type="term" value="F:zinc ion binding"/>
    <property type="evidence" value="ECO:0007669"/>
    <property type="project" value="UniProtKB-KW"/>
</dbReference>
<dbReference type="GO" id="GO:0006974">
    <property type="term" value="P:DNA damage response"/>
    <property type="evidence" value="ECO:0000250"/>
    <property type="project" value="UniProtKB"/>
</dbReference>
<dbReference type="GO" id="GO:0006281">
    <property type="term" value="P:DNA repair"/>
    <property type="evidence" value="ECO:0000250"/>
    <property type="project" value="UniProtKB"/>
</dbReference>
<dbReference type="GO" id="GO:0031297">
    <property type="term" value="P:replication fork processing"/>
    <property type="evidence" value="ECO:0000250"/>
    <property type="project" value="UniProtKB"/>
</dbReference>
<dbReference type="GO" id="GO:0071932">
    <property type="term" value="P:replication fork reversal"/>
    <property type="evidence" value="ECO:0007669"/>
    <property type="project" value="Ensembl"/>
</dbReference>
<dbReference type="GO" id="GO:0009411">
    <property type="term" value="P:response to UV"/>
    <property type="evidence" value="ECO:0000250"/>
    <property type="project" value="UniProtKB"/>
</dbReference>
<dbReference type="CDD" id="cd18010">
    <property type="entry name" value="DEXHc_HARP_SMARCAL1"/>
    <property type="match status" value="1"/>
</dbReference>
<dbReference type="CDD" id="cd00085">
    <property type="entry name" value="HNHc"/>
    <property type="match status" value="1"/>
</dbReference>
<dbReference type="CDD" id="cd18793">
    <property type="entry name" value="SF2_C_SNF"/>
    <property type="match status" value="1"/>
</dbReference>
<dbReference type="FunFam" id="3.40.50.10810:FF:000024">
    <property type="entry name" value="DNA annealing helicase and endonuclease ZRANB3"/>
    <property type="match status" value="1"/>
</dbReference>
<dbReference type="FunFam" id="3.40.50.300:FF:000788">
    <property type="entry name" value="DNA annealing helicase and endonuclease ZRANB3"/>
    <property type="match status" value="1"/>
</dbReference>
<dbReference type="FunFam" id="2.30.30.380:FF:000011">
    <property type="entry name" value="Zinc finger RANBP2-type containing 3"/>
    <property type="match status" value="1"/>
</dbReference>
<dbReference type="Gene3D" id="1.10.30.50">
    <property type="match status" value="1"/>
</dbReference>
<dbReference type="Gene3D" id="3.40.50.300">
    <property type="entry name" value="P-loop containing nucleotide triphosphate hydrolases"/>
    <property type="match status" value="1"/>
</dbReference>
<dbReference type="Gene3D" id="3.40.50.10810">
    <property type="entry name" value="Tandem AAA-ATPase domain"/>
    <property type="match status" value="1"/>
</dbReference>
<dbReference type="Gene3D" id="2.30.30.380">
    <property type="entry name" value="Zn-finger domain of Sec23/24"/>
    <property type="match status" value="1"/>
</dbReference>
<dbReference type="InterPro" id="IPR014001">
    <property type="entry name" value="Helicase_ATP-bd"/>
</dbReference>
<dbReference type="InterPro" id="IPR001650">
    <property type="entry name" value="Helicase_C-like"/>
</dbReference>
<dbReference type="InterPro" id="IPR002711">
    <property type="entry name" value="HNH"/>
</dbReference>
<dbReference type="InterPro" id="IPR003615">
    <property type="entry name" value="HNH_nuc"/>
</dbReference>
<dbReference type="InterPro" id="IPR027417">
    <property type="entry name" value="P-loop_NTPase"/>
</dbReference>
<dbReference type="InterPro" id="IPR038718">
    <property type="entry name" value="SNF2-like_sf"/>
</dbReference>
<dbReference type="InterPro" id="IPR049730">
    <property type="entry name" value="SNF2/RAD54-like_C"/>
</dbReference>
<dbReference type="InterPro" id="IPR000330">
    <property type="entry name" value="SNF2_N"/>
</dbReference>
<dbReference type="InterPro" id="IPR001876">
    <property type="entry name" value="Znf_RanBP2"/>
</dbReference>
<dbReference type="InterPro" id="IPR036443">
    <property type="entry name" value="Znf_RanBP2_sf"/>
</dbReference>
<dbReference type="PANTHER" id="PTHR45766:SF3">
    <property type="entry name" value="DNA ANNEALING HELICASE AND ENDONUCLEASE ZRANB3"/>
    <property type="match status" value="1"/>
</dbReference>
<dbReference type="PANTHER" id="PTHR45766">
    <property type="entry name" value="DNA ANNEALING HELICASE AND ENDONUCLEASE ZRANB3 FAMILY MEMBER"/>
    <property type="match status" value="1"/>
</dbReference>
<dbReference type="Pfam" id="PF00271">
    <property type="entry name" value="Helicase_C"/>
    <property type="match status" value="1"/>
</dbReference>
<dbReference type="Pfam" id="PF01844">
    <property type="entry name" value="HNH"/>
    <property type="match status" value="1"/>
</dbReference>
<dbReference type="Pfam" id="PF00176">
    <property type="entry name" value="SNF2-rel_dom"/>
    <property type="match status" value="1"/>
</dbReference>
<dbReference type="SMART" id="SM00487">
    <property type="entry name" value="DEXDc"/>
    <property type="match status" value="1"/>
</dbReference>
<dbReference type="SMART" id="SM00490">
    <property type="entry name" value="HELICc"/>
    <property type="match status" value="1"/>
</dbReference>
<dbReference type="SMART" id="SM00507">
    <property type="entry name" value="HNHc"/>
    <property type="match status" value="1"/>
</dbReference>
<dbReference type="SMART" id="SM00547">
    <property type="entry name" value="ZnF_RBZ"/>
    <property type="match status" value="1"/>
</dbReference>
<dbReference type="SUPFAM" id="SSF52540">
    <property type="entry name" value="P-loop containing nucleoside triphosphate hydrolases"/>
    <property type="match status" value="2"/>
</dbReference>
<dbReference type="SUPFAM" id="SSF90209">
    <property type="entry name" value="Ran binding protein zinc finger-like"/>
    <property type="match status" value="1"/>
</dbReference>
<dbReference type="PROSITE" id="PS51192">
    <property type="entry name" value="HELICASE_ATP_BIND_1"/>
    <property type="match status" value="1"/>
</dbReference>
<dbReference type="PROSITE" id="PS51194">
    <property type="entry name" value="HELICASE_CTER"/>
    <property type="match status" value="1"/>
</dbReference>
<dbReference type="PROSITE" id="PS01358">
    <property type="entry name" value="ZF_RANBP2_1"/>
    <property type="match status" value="1"/>
</dbReference>
<dbReference type="PROSITE" id="PS50199">
    <property type="entry name" value="ZF_RANBP2_2"/>
    <property type="match status" value="1"/>
</dbReference>